<sequence>MTSSIKITDNSRELNGPVSREKLSSILNEIFNKDEPIPSSVELVLAQLNELSSKHKFIVNVTKLNANNVNTADFSVDSYIGSSWNDKSDGAFHYQIPLGSGQPDTKRILLVSVYWILL</sequence>
<accession>Q6CU41</accession>
<protein>
    <recommendedName>
        <fullName>Topoisomerase I damage affected protein 2</fullName>
    </recommendedName>
</protein>
<organism>
    <name type="scientific">Kluyveromyces lactis (strain ATCC 8585 / CBS 2359 / DSM 70799 / NBRC 1267 / NRRL Y-1140 / WM37)</name>
    <name type="common">Yeast</name>
    <name type="synonym">Candida sphaerica</name>
    <dbReference type="NCBI Taxonomy" id="284590"/>
    <lineage>
        <taxon>Eukaryota</taxon>
        <taxon>Fungi</taxon>
        <taxon>Dikarya</taxon>
        <taxon>Ascomycota</taxon>
        <taxon>Saccharomycotina</taxon>
        <taxon>Saccharomycetes</taxon>
        <taxon>Saccharomycetales</taxon>
        <taxon>Saccharomycetaceae</taxon>
        <taxon>Kluyveromyces</taxon>
    </lineage>
</organism>
<keyword id="KW-0966">Cell projection</keyword>
<keyword id="KW-0963">Cytoplasm</keyword>
<keyword id="KW-1185">Reference proteome</keyword>
<dbReference type="EMBL" id="CR382123">
    <property type="protein sequence ID" value="CAH01399.1"/>
    <property type="molecule type" value="Genomic_DNA"/>
</dbReference>
<dbReference type="RefSeq" id="XP_452548.1">
    <property type="nucleotide sequence ID" value="XM_452548.1"/>
</dbReference>
<dbReference type="SMR" id="Q6CU41"/>
<dbReference type="STRING" id="284590.Q6CU41"/>
<dbReference type="PaxDb" id="284590-Q6CU41"/>
<dbReference type="KEGG" id="kla:KLLA0_C07821g"/>
<dbReference type="eggNOG" id="ENOG502SFEV">
    <property type="taxonomic scope" value="Eukaryota"/>
</dbReference>
<dbReference type="HOGENOM" id="CLU_137494_1_0_1"/>
<dbReference type="InParanoid" id="Q6CU41"/>
<dbReference type="OMA" id="ISVVWIS"/>
<dbReference type="Proteomes" id="UP000000598">
    <property type="component" value="Chromosome C"/>
</dbReference>
<dbReference type="GO" id="GO:0042995">
    <property type="term" value="C:cell projection"/>
    <property type="evidence" value="ECO:0007669"/>
    <property type="project" value="UniProtKB-SubCell"/>
</dbReference>
<dbReference type="GO" id="GO:0005737">
    <property type="term" value="C:cytoplasm"/>
    <property type="evidence" value="ECO:0007669"/>
    <property type="project" value="UniProtKB-SubCell"/>
</dbReference>
<dbReference type="CDD" id="cd21457">
    <property type="entry name" value="DLC-like_TDA2"/>
    <property type="match status" value="1"/>
</dbReference>
<dbReference type="Gene3D" id="3.30.1140.40">
    <property type="entry name" value="Tctex-1"/>
    <property type="match status" value="1"/>
</dbReference>
<dbReference type="InterPro" id="IPR038586">
    <property type="entry name" value="Tctex-1-like_sf"/>
</dbReference>
<reference key="1">
    <citation type="journal article" date="2004" name="Nature">
        <title>Genome evolution in yeasts.</title>
        <authorList>
            <person name="Dujon B."/>
            <person name="Sherman D."/>
            <person name="Fischer G."/>
            <person name="Durrens P."/>
            <person name="Casaregola S."/>
            <person name="Lafontaine I."/>
            <person name="de Montigny J."/>
            <person name="Marck C."/>
            <person name="Neuveglise C."/>
            <person name="Talla E."/>
            <person name="Goffard N."/>
            <person name="Frangeul L."/>
            <person name="Aigle M."/>
            <person name="Anthouard V."/>
            <person name="Babour A."/>
            <person name="Barbe V."/>
            <person name="Barnay S."/>
            <person name="Blanchin S."/>
            <person name="Beckerich J.-M."/>
            <person name="Beyne E."/>
            <person name="Bleykasten C."/>
            <person name="Boisrame A."/>
            <person name="Boyer J."/>
            <person name="Cattolico L."/>
            <person name="Confanioleri F."/>
            <person name="de Daruvar A."/>
            <person name="Despons L."/>
            <person name="Fabre E."/>
            <person name="Fairhead C."/>
            <person name="Ferry-Dumazet H."/>
            <person name="Groppi A."/>
            <person name="Hantraye F."/>
            <person name="Hennequin C."/>
            <person name="Jauniaux N."/>
            <person name="Joyet P."/>
            <person name="Kachouri R."/>
            <person name="Kerrest A."/>
            <person name="Koszul R."/>
            <person name="Lemaire M."/>
            <person name="Lesur I."/>
            <person name="Ma L."/>
            <person name="Muller H."/>
            <person name="Nicaud J.-M."/>
            <person name="Nikolski M."/>
            <person name="Oztas S."/>
            <person name="Ozier-Kalogeropoulos O."/>
            <person name="Pellenz S."/>
            <person name="Potier S."/>
            <person name="Richard G.-F."/>
            <person name="Straub M.-L."/>
            <person name="Suleau A."/>
            <person name="Swennen D."/>
            <person name="Tekaia F."/>
            <person name="Wesolowski-Louvel M."/>
            <person name="Westhof E."/>
            <person name="Wirth B."/>
            <person name="Zeniou-Meyer M."/>
            <person name="Zivanovic Y."/>
            <person name="Bolotin-Fukuhara M."/>
            <person name="Thierry A."/>
            <person name="Bouchier C."/>
            <person name="Caudron B."/>
            <person name="Scarpelli C."/>
            <person name="Gaillardin C."/>
            <person name="Weissenbach J."/>
            <person name="Wincker P."/>
            <person name="Souciet J.-L."/>
        </authorList>
    </citation>
    <scope>NUCLEOTIDE SEQUENCE [LARGE SCALE GENOMIC DNA]</scope>
    <source>
        <strain>ATCC 8585 / CBS 2359 / DSM 70799 / NBRC 1267 / NRRL Y-1140 / WM37</strain>
    </source>
</reference>
<proteinExistence type="inferred from homology"/>
<evidence type="ECO:0000250" key="1">
    <source>
        <dbReference type="UniProtKB" id="P40045"/>
    </source>
</evidence>
<evidence type="ECO:0000305" key="2"/>
<comment type="subcellular location">
    <subcellularLocation>
        <location evidence="1">Cytoplasm</location>
    </subcellularLocation>
    <subcellularLocation>
        <location evidence="1">Cell projection</location>
    </subcellularLocation>
    <text evidence="1">Concentrates at cytoplasmic punctate structures and localizes at the mating projection tip.</text>
</comment>
<comment type="similarity">
    <text evidence="2">Belongs to the TDA2 family.</text>
</comment>
<name>TDA2_KLULA</name>
<feature type="chain" id="PRO_0000410731" description="Topoisomerase I damage affected protein 2">
    <location>
        <begin position="1"/>
        <end position="118"/>
    </location>
</feature>
<gene>
    <name type="primary">TDA2</name>
    <name type="ordered locus">KLLA0C07821g</name>
</gene>